<protein>
    <recommendedName>
        <fullName>Matrix protein</fullName>
    </recommendedName>
</protein>
<reference key="1">
    <citation type="journal article" date="2005" name="J. Virol.">
        <title>Characterization of the Tupaia rhabdovirus genome reveals a long open reading frame overlapping with P and a novel gene encoding a small hydrophobic protein.</title>
        <authorList>
            <person name="Springfeld C."/>
            <person name="Darai G."/>
            <person name="Cattaneo R."/>
        </authorList>
    </citation>
    <scope>NUCLEOTIDE SEQUENCE [GENOMIC RNA]</scope>
</reference>
<feature type="chain" id="PRO_0000432062" description="Matrix protein">
    <location>
        <begin position="1"/>
        <end position="200"/>
    </location>
</feature>
<keyword id="KW-1043">Host membrane</keyword>
<keyword id="KW-1048">Host nucleus</keyword>
<keyword id="KW-0945">Host-virus interaction</keyword>
<keyword id="KW-0472">Membrane</keyword>
<keyword id="KW-1185">Reference proteome</keyword>
<keyword id="KW-1198">Viral budding</keyword>
<keyword id="KW-1187">Viral budding via the host ESCRT complexes</keyword>
<keyword id="KW-0468">Viral matrix protein</keyword>
<keyword id="KW-1188">Viral release from host cell</keyword>
<keyword id="KW-0946">Virion</keyword>
<dbReference type="EMBL" id="AY840978">
    <property type="protein sequence ID" value="AAX47599.1"/>
    <property type="molecule type" value="Genomic_RNA"/>
</dbReference>
<dbReference type="RefSeq" id="YP_238531.1">
    <property type="nucleotide sequence ID" value="NC_007020.1"/>
</dbReference>
<dbReference type="GeneID" id="3416612"/>
<dbReference type="KEGG" id="vg:3416612"/>
<dbReference type="Proteomes" id="UP000029771">
    <property type="component" value="Segment"/>
</dbReference>
<dbReference type="GO" id="GO:0044200">
    <property type="term" value="C:host cell nuclear membrane"/>
    <property type="evidence" value="ECO:0007669"/>
    <property type="project" value="UniProtKB-SubCell"/>
</dbReference>
<dbReference type="GO" id="GO:0016020">
    <property type="term" value="C:membrane"/>
    <property type="evidence" value="ECO:0007669"/>
    <property type="project" value="UniProtKB-KW"/>
</dbReference>
<dbReference type="GO" id="GO:0055036">
    <property type="term" value="C:virion membrane"/>
    <property type="evidence" value="ECO:0007669"/>
    <property type="project" value="UniProtKB-SubCell"/>
</dbReference>
<dbReference type="GO" id="GO:0039660">
    <property type="term" value="F:structural constituent of virion"/>
    <property type="evidence" value="ECO:0007669"/>
    <property type="project" value="UniProtKB-KW"/>
</dbReference>
<dbReference type="GO" id="GO:0039702">
    <property type="term" value="P:viral budding via host ESCRT complex"/>
    <property type="evidence" value="ECO:0007669"/>
    <property type="project" value="UniProtKB-KW"/>
</dbReference>
<evidence type="ECO:0000250" key="1">
    <source>
        <dbReference type="UniProtKB" id="P03519"/>
    </source>
</evidence>
<proteinExistence type="inferred from homology"/>
<gene>
    <name type="primary">M</name>
</gene>
<accession>Q4VKV5</accession>
<name>MATRX_TUPVT</name>
<sequence length="200" mass="22433">MLRWFSFGSNEGSEVAGNGWSVKPIGNMSIKKDDPVGFPQGYQCLLKVIIQLEKKDPTKSDVSELIAGWVKRYSGPHLLERLIKALIILTVPKLSRENIDNHVKLGGLFEGQVTFHFSSRDLIPTKYLSYATSIRTTVKGIYSYLSIEAELNPSSHQGTSVAKLLRASDVAKYYDNTLQSIFSQFEIKNVTITDDQIIFN</sequence>
<organismHost>
    <name type="scientific">Tupaia</name>
    <dbReference type="NCBI Taxonomy" id="9394"/>
</organismHost>
<organism>
    <name type="scientific">Tupaia virus (isolate Tupaia/Thailand/-/1986)</name>
    <name type="common">TUPV</name>
    <dbReference type="NCBI Taxonomy" id="1560034"/>
    <lineage>
        <taxon>Viruses</taxon>
        <taxon>Riboviria</taxon>
        <taxon>Orthornavirae</taxon>
        <taxon>Negarnaviricota</taxon>
        <taxon>Haploviricotina</taxon>
        <taxon>Monjiviricetes</taxon>
        <taxon>Mononegavirales</taxon>
        <taxon>Rhabdoviridae</taxon>
        <taxon>Alpharhabdovirinae</taxon>
        <taxon>Tupavirus</taxon>
        <taxon>Tupavirus tupaia</taxon>
    </lineage>
</organism>
<comment type="function">
    <text evidence="1">Plays a major role in assembly and budding of virion, by recruiting cellular partners of the ESCRT complexes that play a key role in releasing the budding particle from the host membrane. Condensates the ribonucleocapsid core during virus assembly.</text>
</comment>
<comment type="subunit">
    <text evidence="1">Homomultimer. Interacts with viral nucleocapsid.</text>
</comment>
<comment type="subcellular location">
    <subcellularLocation>
        <location evidence="1">Virion membrane</location>
        <topology evidence="1">Peripheral membrane protein</topology>
    </subcellularLocation>
    <subcellularLocation>
        <location evidence="1">Host endomembrane system</location>
        <topology evidence="1">Peripheral membrane protein</topology>
    </subcellularLocation>
    <subcellularLocation>
        <location evidence="1">Host nucleus membrane</location>
        <topology evidence="1">Peripheral membrane protein</topology>
    </subcellularLocation>
</comment>